<dbReference type="EC" id="1.2.1.16" evidence="2"/>
<dbReference type="EMBL" id="CU329670">
    <property type="protein sequence ID" value="CAK9837733.1"/>
    <property type="molecule type" value="Genomic_DNA"/>
</dbReference>
<dbReference type="RefSeq" id="NP_593499.2">
    <property type="nucleotide sequence ID" value="NM_001018933.2"/>
</dbReference>
<dbReference type="SMR" id="Q9US47"/>
<dbReference type="BioGRID" id="279695">
    <property type="interactions" value="11"/>
</dbReference>
<dbReference type="FunCoup" id="Q9US47">
    <property type="interactions" value="177"/>
</dbReference>
<dbReference type="STRING" id="284812.Q9US47"/>
<dbReference type="PaxDb" id="4896-SPAC1002.12c.1"/>
<dbReference type="EnsemblFungi" id="SPAC1002.12c.1">
    <property type="protein sequence ID" value="SPAC1002.12c.1:pep"/>
    <property type="gene ID" value="SPAC1002.12c"/>
</dbReference>
<dbReference type="GeneID" id="2543267"/>
<dbReference type="KEGG" id="spo:2543267"/>
<dbReference type="PomBase" id="SPAC1002.12c">
    <property type="gene designation" value="ssd1"/>
</dbReference>
<dbReference type="VEuPathDB" id="FungiDB:SPAC1002.12c"/>
<dbReference type="eggNOG" id="KOG2451">
    <property type="taxonomic scope" value="Eukaryota"/>
</dbReference>
<dbReference type="HOGENOM" id="CLU_005391_0_0_1"/>
<dbReference type="InParanoid" id="Q9US47"/>
<dbReference type="OMA" id="VAACFRF"/>
<dbReference type="Reactome" id="R-SPO-916853">
    <property type="pathway name" value="Degradation of GABA"/>
</dbReference>
<dbReference type="UniPathway" id="UPA00733"/>
<dbReference type="PRO" id="PR:Q9US47"/>
<dbReference type="Proteomes" id="UP000002485">
    <property type="component" value="Chromosome I"/>
</dbReference>
<dbReference type="GO" id="GO:0005829">
    <property type="term" value="C:cytosol"/>
    <property type="evidence" value="ECO:0007005"/>
    <property type="project" value="PomBase"/>
</dbReference>
<dbReference type="GO" id="GO:0005739">
    <property type="term" value="C:mitochondrion"/>
    <property type="evidence" value="ECO:0000304"/>
    <property type="project" value="PomBase"/>
</dbReference>
<dbReference type="GO" id="GO:0004777">
    <property type="term" value="F:succinate-semialdehyde dehydrogenase (NAD+) activity"/>
    <property type="evidence" value="ECO:0007669"/>
    <property type="project" value="UniProtKB-UniRule"/>
</dbReference>
<dbReference type="GO" id="GO:0036243">
    <property type="term" value="F:succinate-semialdehyde dehydrogenase (NADP+) activity"/>
    <property type="evidence" value="ECO:0007669"/>
    <property type="project" value="RHEA"/>
</dbReference>
<dbReference type="GO" id="GO:0009450">
    <property type="term" value="P:gamma-aminobutyric acid catabolic process"/>
    <property type="evidence" value="ECO:0007669"/>
    <property type="project" value="InterPro"/>
</dbReference>
<dbReference type="CDD" id="cd07103">
    <property type="entry name" value="ALDH_F5_SSADH_GabD"/>
    <property type="match status" value="1"/>
</dbReference>
<dbReference type="FunFam" id="3.40.309.10:FF:000004">
    <property type="entry name" value="Succinate-semialdehyde dehydrogenase I"/>
    <property type="match status" value="1"/>
</dbReference>
<dbReference type="FunFam" id="3.40.605.10:FF:000005">
    <property type="entry name" value="Succinate-semialdehyde dehydrogenase I"/>
    <property type="match status" value="1"/>
</dbReference>
<dbReference type="Gene3D" id="3.40.605.10">
    <property type="entry name" value="Aldehyde Dehydrogenase, Chain A, domain 1"/>
    <property type="match status" value="1"/>
</dbReference>
<dbReference type="Gene3D" id="3.40.309.10">
    <property type="entry name" value="Aldehyde Dehydrogenase, Chain A, domain 2"/>
    <property type="match status" value="1"/>
</dbReference>
<dbReference type="InterPro" id="IPR016161">
    <property type="entry name" value="Ald_DH/histidinol_DH"/>
</dbReference>
<dbReference type="InterPro" id="IPR016163">
    <property type="entry name" value="Ald_DH_C"/>
</dbReference>
<dbReference type="InterPro" id="IPR029510">
    <property type="entry name" value="Ald_DH_CS_GLU"/>
</dbReference>
<dbReference type="InterPro" id="IPR016162">
    <property type="entry name" value="Ald_DH_N"/>
</dbReference>
<dbReference type="InterPro" id="IPR015590">
    <property type="entry name" value="Aldehyde_DH_dom"/>
</dbReference>
<dbReference type="InterPro" id="IPR050740">
    <property type="entry name" value="Aldehyde_DH_Superfamily"/>
</dbReference>
<dbReference type="InterPro" id="IPR010102">
    <property type="entry name" value="Succ_semiAld_DH"/>
</dbReference>
<dbReference type="NCBIfam" id="TIGR01780">
    <property type="entry name" value="SSADH"/>
    <property type="match status" value="1"/>
</dbReference>
<dbReference type="PANTHER" id="PTHR43353">
    <property type="entry name" value="SUCCINATE-SEMIALDEHYDE DEHYDROGENASE, MITOCHONDRIAL"/>
    <property type="match status" value="1"/>
</dbReference>
<dbReference type="PANTHER" id="PTHR43353:SF5">
    <property type="entry name" value="SUCCINATE-SEMIALDEHYDE DEHYDROGENASE, MITOCHONDRIAL"/>
    <property type="match status" value="1"/>
</dbReference>
<dbReference type="Pfam" id="PF00171">
    <property type="entry name" value="Aldedh"/>
    <property type="match status" value="1"/>
</dbReference>
<dbReference type="SUPFAM" id="SSF53720">
    <property type="entry name" value="ALDH-like"/>
    <property type="match status" value="1"/>
</dbReference>
<dbReference type="PROSITE" id="PS00687">
    <property type="entry name" value="ALDEHYDE_DEHYDR_GLU"/>
    <property type="match status" value="1"/>
</dbReference>
<name>SSDH1_SCHPO</name>
<comment type="function">
    <text evidence="2">Catalyzes the oxidation of succinate semialdehyde to succinate. Can utilize both NAD(+) or NADP(+) as a coenzyme. Functions in a gamma-aminobutyrate (GABA) degradation pathway that allows growth utilizing GABA as a nitrogen source. Functions in the GABA shunt, which allows to bypass 2 reactions in the TCA cycle by removing alpha-ketoglutarate from the cycle and feeding succinate and NADH back into the cycle.</text>
</comment>
<comment type="catalytic activity">
    <reaction evidence="2">
        <text>succinate semialdehyde + NAD(+) + H2O = succinate + NADH + 2 H(+)</text>
        <dbReference type="Rhea" id="RHEA:13217"/>
        <dbReference type="ChEBI" id="CHEBI:15377"/>
        <dbReference type="ChEBI" id="CHEBI:15378"/>
        <dbReference type="ChEBI" id="CHEBI:30031"/>
        <dbReference type="ChEBI" id="CHEBI:57540"/>
        <dbReference type="ChEBI" id="CHEBI:57706"/>
        <dbReference type="ChEBI" id="CHEBI:57945"/>
        <dbReference type="EC" id="1.2.1.16"/>
    </reaction>
</comment>
<comment type="catalytic activity">
    <reaction evidence="2">
        <text>succinate semialdehyde + NADP(+) + H2O = succinate + NADPH + 2 H(+)</text>
        <dbReference type="Rhea" id="RHEA:13213"/>
        <dbReference type="ChEBI" id="CHEBI:15377"/>
        <dbReference type="ChEBI" id="CHEBI:15378"/>
        <dbReference type="ChEBI" id="CHEBI:30031"/>
        <dbReference type="ChEBI" id="CHEBI:57706"/>
        <dbReference type="ChEBI" id="CHEBI:57783"/>
        <dbReference type="ChEBI" id="CHEBI:58349"/>
        <dbReference type="EC" id="1.2.1.16"/>
    </reaction>
</comment>
<comment type="pathway">
    <text evidence="2">Amino-acid degradation; 4-aminobutanoate degradation.</text>
</comment>
<comment type="subunit">
    <text evidence="2">Homotetramer.</text>
</comment>
<comment type="subcellular location">
    <subcellularLocation>
        <location evidence="5">Cytoplasm</location>
    </subcellularLocation>
</comment>
<comment type="similarity">
    <text evidence="6">Belongs to the aldehyde dehydrogenase family.</text>
</comment>
<accession>Q9US47</accession>
<accession>A0AAN2H765</accession>
<keyword id="KW-0963">Cytoplasm</keyword>
<keyword id="KW-0521">NADP</keyword>
<keyword id="KW-0560">Oxidoreductase</keyword>
<keyword id="KW-1185">Reference proteome</keyword>
<protein>
    <recommendedName>
        <fullName>Succinate-semialdehyde dehydrogenase [NADP(+)] 1</fullName>
        <shortName>SSA dehydrogenase 1</shortName>
        <shortName>SSADH 1</shortName>
        <shortName>SSDH 1</shortName>
        <ecNumber evidence="2">1.2.1.16</ecNumber>
    </recommendedName>
</protein>
<gene>
    <name type="primary">ssd1</name>
    <name evidence="7" type="ORF">SPAC1002.12c</name>
</gene>
<feature type="chain" id="PRO_0000310351" description="Succinate-semialdehyde dehydrogenase [NADP(+)] 1">
    <location>
        <begin position="1"/>
        <end position="498"/>
    </location>
</feature>
<feature type="active site" evidence="3">
    <location>
        <position position="269"/>
    </location>
</feature>
<feature type="active site" evidence="4">
    <location>
        <position position="303"/>
    </location>
</feature>
<feature type="binding site" evidence="1">
    <location>
        <begin position="247"/>
        <end position="252"/>
    </location>
    <ligand>
        <name>NAD(+)</name>
        <dbReference type="ChEBI" id="CHEBI:57540"/>
    </ligand>
</feature>
<sequence length="498" mass="53272">MSTSSKLSTNIKDLSLFDLEEFPARSYIGGKWVTAASGKTFDVENPGLNETLAPVTDMSVEETRKAIKVAHEAFLSYRNSDIKERYAILRRWYDLIMENADDLATMMTLENGKALGDAKGEVVYAAKFIDWFAGEALRISGDSSMSSNPQNRIITIKQPVGVVGIITPWNFPAAMITRKVGAALAAGCTVVIRPAAETPFTALALAKLAERAGVPAGVLNMVTANSPSEHGIELTTNPLIRKVSFTGSTNVGKILAKQSSSTLKKLSLELGGNAPFIVFEDADLEKAADALMACKFRGSGQTCVCANRIYVHSSVYDAFVDLVTERVSKFKLGYGLDAGVTHGPLISEKAISKVKQHVEDAVQKGGVVVTGGKVASNLGPMYFEPTVIINAKQGMLISEEETFGPVGALFKFDTEDEVVAWANDSPVGLAGYLFSKDISRVFRVGEALQVGMVGCNTGLVSDVLSPFGGVKESGFGREGSKYGISEYLDIKSLTISTL</sequence>
<proteinExistence type="inferred from homology"/>
<reference key="1">
    <citation type="journal article" date="2002" name="Nature">
        <title>The genome sequence of Schizosaccharomyces pombe.</title>
        <authorList>
            <person name="Wood V."/>
            <person name="Gwilliam R."/>
            <person name="Rajandream M.A."/>
            <person name="Lyne M.H."/>
            <person name="Lyne R."/>
            <person name="Stewart A."/>
            <person name="Sgouros J.G."/>
            <person name="Peat N."/>
            <person name="Hayles J."/>
            <person name="Baker S.G."/>
            <person name="Basham D."/>
            <person name="Bowman S."/>
            <person name="Brooks K."/>
            <person name="Brown D."/>
            <person name="Brown S."/>
            <person name="Chillingworth T."/>
            <person name="Churcher C.M."/>
            <person name="Collins M."/>
            <person name="Connor R."/>
            <person name="Cronin A."/>
            <person name="Davis P."/>
            <person name="Feltwell T."/>
            <person name="Fraser A."/>
            <person name="Gentles S."/>
            <person name="Goble A."/>
            <person name="Hamlin N."/>
            <person name="Harris D.E."/>
            <person name="Hidalgo J."/>
            <person name="Hodgson G."/>
            <person name="Holroyd S."/>
            <person name="Hornsby T."/>
            <person name="Howarth S."/>
            <person name="Huckle E.J."/>
            <person name="Hunt S."/>
            <person name="Jagels K."/>
            <person name="James K.D."/>
            <person name="Jones L."/>
            <person name="Jones M."/>
            <person name="Leather S."/>
            <person name="McDonald S."/>
            <person name="McLean J."/>
            <person name="Mooney P."/>
            <person name="Moule S."/>
            <person name="Mungall K.L."/>
            <person name="Murphy L.D."/>
            <person name="Niblett D."/>
            <person name="Odell C."/>
            <person name="Oliver K."/>
            <person name="O'Neil S."/>
            <person name="Pearson D."/>
            <person name="Quail M.A."/>
            <person name="Rabbinowitsch E."/>
            <person name="Rutherford K.M."/>
            <person name="Rutter S."/>
            <person name="Saunders D."/>
            <person name="Seeger K."/>
            <person name="Sharp S."/>
            <person name="Skelton J."/>
            <person name="Simmonds M.N."/>
            <person name="Squares R."/>
            <person name="Squares S."/>
            <person name="Stevens K."/>
            <person name="Taylor K."/>
            <person name="Taylor R.G."/>
            <person name="Tivey A."/>
            <person name="Walsh S.V."/>
            <person name="Warren T."/>
            <person name="Whitehead S."/>
            <person name="Woodward J.R."/>
            <person name="Volckaert G."/>
            <person name="Aert R."/>
            <person name="Robben J."/>
            <person name="Grymonprez B."/>
            <person name="Weltjens I."/>
            <person name="Vanstreels E."/>
            <person name="Rieger M."/>
            <person name="Schaefer M."/>
            <person name="Mueller-Auer S."/>
            <person name="Gabel C."/>
            <person name="Fuchs M."/>
            <person name="Duesterhoeft A."/>
            <person name="Fritzc C."/>
            <person name="Holzer E."/>
            <person name="Moestl D."/>
            <person name="Hilbert H."/>
            <person name="Borzym K."/>
            <person name="Langer I."/>
            <person name="Beck A."/>
            <person name="Lehrach H."/>
            <person name="Reinhardt R."/>
            <person name="Pohl T.M."/>
            <person name="Eger P."/>
            <person name="Zimmermann W."/>
            <person name="Wedler H."/>
            <person name="Wambutt R."/>
            <person name="Purnelle B."/>
            <person name="Goffeau A."/>
            <person name="Cadieu E."/>
            <person name="Dreano S."/>
            <person name="Gloux S."/>
            <person name="Lelaure V."/>
            <person name="Mottier S."/>
            <person name="Galibert F."/>
            <person name="Aves S.J."/>
            <person name="Xiang Z."/>
            <person name="Hunt C."/>
            <person name="Moore K."/>
            <person name="Hurst S.M."/>
            <person name="Lucas M."/>
            <person name="Rochet M."/>
            <person name="Gaillardin C."/>
            <person name="Tallada V.A."/>
            <person name="Garzon A."/>
            <person name="Thode G."/>
            <person name="Daga R.R."/>
            <person name="Cruzado L."/>
            <person name="Jimenez J."/>
            <person name="Sanchez M."/>
            <person name="del Rey F."/>
            <person name="Benito J."/>
            <person name="Dominguez A."/>
            <person name="Revuelta J.L."/>
            <person name="Moreno S."/>
            <person name="Armstrong J."/>
            <person name="Forsburg S.L."/>
            <person name="Cerutti L."/>
            <person name="Lowe T."/>
            <person name="McCombie W.R."/>
            <person name="Paulsen I."/>
            <person name="Potashkin J."/>
            <person name="Shpakovski G.V."/>
            <person name="Ussery D."/>
            <person name="Barrell B.G."/>
            <person name="Nurse P."/>
        </authorList>
    </citation>
    <scope>NUCLEOTIDE SEQUENCE [LARGE SCALE GENOMIC DNA]</scope>
    <source>
        <strain>972 / ATCC 24843</strain>
    </source>
</reference>
<reference key="2">
    <citation type="journal article" date="2011" name="Science">
        <title>Comparative functional genomics of the fission yeasts.</title>
        <authorList>
            <person name="Rhind N."/>
            <person name="Chen Z."/>
            <person name="Yassour M."/>
            <person name="Thompson D.A."/>
            <person name="Haas B.J."/>
            <person name="Habib N."/>
            <person name="Wapinski I."/>
            <person name="Roy S."/>
            <person name="Lin M.F."/>
            <person name="Heiman D.I."/>
            <person name="Young S.K."/>
            <person name="Furuya K."/>
            <person name="Guo Y."/>
            <person name="Pidoux A."/>
            <person name="Chen H.M."/>
            <person name="Robbertse B."/>
            <person name="Goldberg J.M."/>
            <person name="Aoki K."/>
            <person name="Bayne E.H."/>
            <person name="Berlin A.M."/>
            <person name="Desjardins C.A."/>
            <person name="Dobbs E."/>
            <person name="Dukaj L."/>
            <person name="Fan L."/>
            <person name="FitzGerald M.G."/>
            <person name="French C."/>
            <person name="Gujja S."/>
            <person name="Hansen K."/>
            <person name="Keifenheim D."/>
            <person name="Levin J.Z."/>
            <person name="Mosher R.A."/>
            <person name="Mueller C.A."/>
            <person name="Pfiffner J."/>
            <person name="Priest M."/>
            <person name="Russ C."/>
            <person name="Smialowska A."/>
            <person name="Swoboda P."/>
            <person name="Sykes S.M."/>
            <person name="Vaughn M."/>
            <person name="Vengrova S."/>
            <person name="Yoder R."/>
            <person name="Zeng Q."/>
            <person name="Allshire R."/>
            <person name="Baulcombe D."/>
            <person name="Birren B.W."/>
            <person name="Brown W."/>
            <person name="Ekwall K."/>
            <person name="Kellis M."/>
            <person name="Leatherwood J."/>
            <person name="Levin H."/>
            <person name="Margalit H."/>
            <person name="Martienssen R."/>
            <person name="Nieduszynski C.A."/>
            <person name="Spatafora J.W."/>
            <person name="Friedman N."/>
            <person name="Dalgaard J.Z."/>
            <person name="Baumann P."/>
            <person name="Niki H."/>
            <person name="Regev A."/>
            <person name="Nusbaum C."/>
        </authorList>
    </citation>
    <scope>REVISION OF GENE MODEL</scope>
</reference>
<reference key="3">
    <citation type="journal article" date="2006" name="Nat. Biotechnol.">
        <title>ORFeome cloning and global analysis of protein localization in the fission yeast Schizosaccharomyces pombe.</title>
        <authorList>
            <person name="Matsuyama A."/>
            <person name="Arai R."/>
            <person name="Yashiroda Y."/>
            <person name="Shirai A."/>
            <person name="Kamata A."/>
            <person name="Sekido S."/>
            <person name="Kobayashi Y."/>
            <person name="Hashimoto A."/>
            <person name="Hamamoto M."/>
            <person name="Hiraoka Y."/>
            <person name="Horinouchi S."/>
            <person name="Yoshida M."/>
        </authorList>
    </citation>
    <scope>SUBCELLULAR LOCATION [LARGE SCALE ANALYSIS]</scope>
</reference>
<evidence type="ECO:0000250" key="1"/>
<evidence type="ECO:0000250" key="2">
    <source>
        <dbReference type="UniProtKB" id="P38067"/>
    </source>
</evidence>
<evidence type="ECO:0000255" key="3">
    <source>
        <dbReference type="PROSITE-ProRule" id="PRU10007"/>
    </source>
</evidence>
<evidence type="ECO:0000255" key="4">
    <source>
        <dbReference type="PROSITE-ProRule" id="PRU10008"/>
    </source>
</evidence>
<evidence type="ECO:0000269" key="5">
    <source>
    </source>
</evidence>
<evidence type="ECO:0000305" key="6"/>
<evidence type="ECO:0000312" key="7">
    <source>
        <dbReference type="PomBase" id="SPAC1002.12c"/>
    </source>
</evidence>
<organism>
    <name type="scientific">Schizosaccharomyces pombe (strain 972 / ATCC 24843)</name>
    <name type="common">Fission yeast</name>
    <dbReference type="NCBI Taxonomy" id="284812"/>
    <lineage>
        <taxon>Eukaryota</taxon>
        <taxon>Fungi</taxon>
        <taxon>Dikarya</taxon>
        <taxon>Ascomycota</taxon>
        <taxon>Taphrinomycotina</taxon>
        <taxon>Schizosaccharomycetes</taxon>
        <taxon>Schizosaccharomycetales</taxon>
        <taxon>Schizosaccharomycetaceae</taxon>
        <taxon>Schizosaccharomyces</taxon>
    </lineage>
</organism>